<keyword id="KW-0067">ATP-binding</keyword>
<keyword id="KW-0227">DNA damage</keyword>
<keyword id="KW-0233">DNA recombination</keyword>
<keyword id="KW-0234">DNA repair</keyword>
<keyword id="KW-0238">DNA-binding</keyword>
<keyword id="KW-0347">Helicase</keyword>
<keyword id="KW-0378">Hydrolase</keyword>
<keyword id="KW-0413">Isomerase</keyword>
<keyword id="KW-1017">Isopeptide bond</keyword>
<keyword id="KW-0469">Meiosis</keyword>
<keyword id="KW-0547">Nucleotide-binding</keyword>
<keyword id="KW-0539">Nucleus</keyword>
<keyword id="KW-0799">Topoisomerase</keyword>
<keyword id="KW-0832">Ubl conjugation</keyword>
<organism>
    <name type="scientific">Saccharomyces cerevisiae (strain AWRI1631)</name>
    <name type="common">Baker's yeast</name>
    <dbReference type="NCBI Taxonomy" id="545124"/>
    <lineage>
        <taxon>Eukaryota</taxon>
        <taxon>Fungi</taxon>
        <taxon>Dikarya</taxon>
        <taxon>Ascomycota</taxon>
        <taxon>Saccharomycotina</taxon>
        <taxon>Saccharomycetes</taxon>
        <taxon>Saccharomycetales</taxon>
        <taxon>Saccharomycetaceae</taxon>
        <taxon>Saccharomyces</taxon>
    </lineage>
</organism>
<comment type="function">
    <text evidence="1">Involved in the recombinational repair of double-strand breaks (DSB) in DNA during mitosis and meiosis. Has DNA dependent ATPase activity. Promotes D-loop (displacement loop) formation with RAD51 recombinase. Modifies the topology of double-stranded DNA during the D-loop reaction to facilitate the invasion of the homologous duplex molecule by the initiating single-stranded DNA substrate. Required for adaptation from G2/M checkpoint arrest induced by a double strand break, by participating in monitoring the extent of single-stranded DNA produced by resection of DNA ends. This role is distinct from its roles in recombination. Promotes colocalization of RAD51 and DMC1 during meiotic recombination. Involved in crossover interference (By similarity).</text>
</comment>
<comment type="catalytic activity">
    <reaction>
        <text>ATP + H2O = ADP + phosphate + H(+)</text>
        <dbReference type="Rhea" id="RHEA:13065"/>
        <dbReference type="ChEBI" id="CHEBI:15377"/>
        <dbReference type="ChEBI" id="CHEBI:15378"/>
        <dbReference type="ChEBI" id="CHEBI:30616"/>
        <dbReference type="ChEBI" id="CHEBI:43474"/>
        <dbReference type="ChEBI" id="CHEBI:456216"/>
        <dbReference type="EC" id="3.6.4.12"/>
    </reaction>
</comment>
<comment type="subunit">
    <text evidence="1">Interacts with RAD51 and DMC1.</text>
</comment>
<comment type="subcellular location">
    <subcellularLocation>
        <location evidence="1">Nucleus</location>
    </subcellularLocation>
</comment>
<comment type="similarity">
    <text evidence="6">Belongs to the SNF2/RAD54 helicase family.</text>
</comment>
<accession>B5VE38</accession>
<evidence type="ECO:0000250" key="1"/>
<evidence type="ECO:0000250" key="2">
    <source>
        <dbReference type="UniProtKB" id="P38086"/>
    </source>
</evidence>
<evidence type="ECO:0000255" key="3">
    <source>
        <dbReference type="PROSITE-ProRule" id="PRU00541"/>
    </source>
</evidence>
<evidence type="ECO:0000255" key="4">
    <source>
        <dbReference type="PROSITE-ProRule" id="PRU00542"/>
    </source>
</evidence>
<evidence type="ECO:0000256" key="5">
    <source>
        <dbReference type="SAM" id="MobiDB-lite"/>
    </source>
</evidence>
<evidence type="ECO:0000305" key="6"/>
<reference key="1">
    <citation type="journal article" date="2008" name="FEMS Yeast Res.">
        <title>Comparative genome analysis of a Saccharomyces cerevisiae wine strain.</title>
        <authorList>
            <person name="Borneman A.R."/>
            <person name="Forgan A.H."/>
            <person name="Pretorius I.S."/>
            <person name="Chambers P.J."/>
        </authorList>
    </citation>
    <scope>NUCLEOTIDE SEQUENCE [LARGE SCALE GENOMIC DNA]</scope>
    <source>
        <strain>AWRI1631</strain>
    </source>
</reference>
<feature type="chain" id="PRO_0000393312" description="DNA repair and recombination protein RDH54">
    <location>
        <begin position="1"/>
        <end position="924"/>
    </location>
</feature>
<feature type="domain" description="Helicase ATP-binding" evidence="3">
    <location>
        <begin position="299"/>
        <end position="487"/>
    </location>
</feature>
<feature type="domain" description="Helicase C-terminal" evidence="4">
    <location>
        <begin position="631"/>
        <end position="790"/>
    </location>
</feature>
<feature type="region of interest" description="Disordered" evidence="5">
    <location>
        <begin position="1"/>
        <end position="21"/>
    </location>
</feature>
<feature type="region of interest" description="Disordered" evidence="5">
    <location>
        <begin position="155"/>
        <end position="182"/>
    </location>
</feature>
<feature type="short sequence motif" description="DEGH box">
    <location>
        <begin position="472"/>
        <end position="475"/>
    </location>
</feature>
<feature type="compositionally biased region" description="Basic and acidic residues" evidence="5">
    <location>
        <begin position="1"/>
        <end position="10"/>
    </location>
</feature>
<feature type="compositionally biased region" description="Low complexity" evidence="5">
    <location>
        <begin position="168"/>
        <end position="178"/>
    </location>
</feature>
<feature type="binding site" evidence="3">
    <location>
        <begin position="346"/>
        <end position="353"/>
    </location>
    <ligand>
        <name>ATP</name>
        <dbReference type="ChEBI" id="CHEBI:30616"/>
    </ligand>
</feature>
<feature type="cross-link" description="Glycyl lysine isopeptide (Lys-Gly) (interchain with G-Cter in ubiquitin)" evidence="2">
    <location>
        <position position="615"/>
    </location>
</feature>
<name>RDH54_YEAS6</name>
<sequence length="924" mass="104155">MQIPKYENKPFKPPRRVGSNKYTQLKPTATAVTTAPISKAKVTVNLKRSISAGPTLNLAKKPNNLSSNENTRYFTIMYRKPTTKKHKTWSGDGYATLKASSDKLCFYNEAGKFFGSSMLPSDSDSLFETLFKAGSNEVQLDYELKENAEIRSAKEALSQNMGNPNPPTTSTTETVPSTKNDGGKYQMPLSQLFSLNTVKRFKSVTKQTNEHMTTVPKTSQNSKAKKYYPVFDVNKIDNPIVMNKNAAAEVDVIVDPLLGKFLRPHQREGVKFMYDCLMGLARPTIENPDIDCTTKSLVLENDSDISGCLLADDMGLGKTLMSITLIWTLIRQTPFASKVSCSQSGIPLTGLCKKILVVCPVTLIGNWKREFGKWLNLSRIGVLTLSSRNSPDMDKMAVRNFLKVQRIYQVLIIGYEKLLSVSEELEKNKHLIDMLVCDEGHRLKNGASKILNTLKSLDIRRKLLLTGTPIQNDLNEFFTIIDFINPGILGSFASFKRRFIIPITRARDTANRYNEELLEKGEERSKEMIEITKRFILRRTNAILEKYLPPKTDIILFCKPYSQQILAFKDILQGARLDFGQLTFSSSLGLITLLKKVCNSPGLVGSDPYYKSHIKDTQSQDSYSRSLNSGKLRVLMTLLEGIRKGTKEKVVVVSNYTQTLDIIENLMNMAGMSHCRLDGSIPAKQRDSIVTSFNRNPAIFGFLLSAKSGGVGLNLVGASRLILFDNDWNPSVDLQAMSRIHRDGQKKPCFIYRLVTTGCIDEKILQRQLMKNSLSQKFLGDSEMRNKESSNDDLFNKEDLKDLFSVHTDTKSNTHDLICSCDGLGEEIEYPETNQQQNTVELRKRSTTTWTSALDLQKKMNEAATNDDAKKSQYIRQCLVHYKHIDPARQDELFDEVITDSFTDLKDSITFAFVKPGEICLREQ</sequence>
<protein>
    <recommendedName>
        <fullName>DNA repair and recombination protein RDH54</fullName>
    </recommendedName>
    <alternativeName>
        <fullName>RAD homolog 54</fullName>
    </alternativeName>
    <alternativeName>
        <fullName>Recombination factor TID1</fullName>
    </alternativeName>
    <alternativeName>
        <fullName>Two hybrid interaction with DMC1 protein 1</fullName>
    </alternativeName>
    <domain>
        <recommendedName>
            <fullName>DNA topoisomerase</fullName>
            <ecNumber>5.99.1.-</ecNumber>
        </recommendedName>
    </domain>
    <domain>
        <recommendedName>
            <fullName>Putative helicase</fullName>
            <ecNumber>3.6.4.12</ecNumber>
        </recommendedName>
    </domain>
</protein>
<dbReference type="EC" id="5.99.1.-"/>
<dbReference type="EC" id="3.6.4.12"/>
<dbReference type="EMBL" id="ABSV01000113">
    <property type="protein sequence ID" value="EDZ73802.1"/>
    <property type="molecule type" value="Genomic_DNA"/>
</dbReference>
<dbReference type="SMR" id="B5VE38"/>
<dbReference type="OrthoDB" id="3905at4893"/>
<dbReference type="Proteomes" id="UP000008988">
    <property type="component" value="Unassembled WGS sequence"/>
</dbReference>
<dbReference type="GO" id="GO:0005634">
    <property type="term" value="C:nucleus"/>
    <property type="evidence" value="ECO:0007669"/>
    <property type="project" value="UniProtKB-SubCell"/>
</dbReference>
<dbReference type="GO" id="GO:0005524">
    <property type="term" value="F:ATP binding"/>
    <property type="evidence" value="ECO:0007669"/>
    <property type="project" value="UniProtKB-KW"/>
</dbReference>
<dbReference type="GO" id="GO:0016887">
    <property type="term" value="F:ATP hydrolysis activity"/>
    <property type="evidence" value="ECO:0007669"/>
    <property type="project" value="RHEA"/>
</dbReference>
<dbReference type="GO" id="GO:0003677">
    <property type="term" value="F:DNA binding"/>
    <property type="evidence" value="ECO:0007669"/>
    <property type="project" value="UniProtKB-KW"/>
</dbReference>
<dbReference type="GO" id="GO:0003916">
    <property type="term" value="F:DNA topoisomerase activity"/>
    <property type="evidence" value="ECO:0007669"/>
    <property type="project" value="UniProtKB-KW"/>
</dbReference>
<dbReference type="GO" id="GO:0015616">
    <property type="term" value="F:DNA translocase activity"/>
    <property type="evidence" value="ECO:0007669"/>
    <property type="project" value="TreeGrafter"/>
</dbReference>
<dbReference type="GO" id="GO:0004386">
    <property type="term" value="F:helicase activity"/>
    <property type="evidence" value="ECO:0007669"/>
    <property type="project" value="UniProtKB-KW"/>
</dbReference>
<dbReference type="GO" id="GO:0000724">
    <property type="term" value="P:double-strand break repair via homologous recombination"/>
    <property type="evidence" value="ECO:0007669"/>
    <property type="project" value="TreeGrafter"/>
</dbReference>
<dbReference type="GO" id="GO:0007131">
    <property type="term" value="P:reciprocal meiotic recombination"/>
    <property type="evidence" value="ECO:0007669"/>
    <property type="project" value="TreeGrafter"/>
</dbReference>
<dbReference type="CDD" id="cd18004">
    <property type="entry name" value="DEXHc_RAD54"/>
    <property type="match status" value="1"/>
</dbReference>
<dbReference type="CDD" id="cd18793">
    <property type="entry name" value="SF2_C_SNF"/>
    <property type="match status" value="1"/>
</dbReference>
<dbReference type="FunFam" id="3.40.50.10810:FF:000058">
    <property type="entry name" value="RDH54p DNA-dependent ATPase"/>
    <property type="match status" value="1"/>
</dbReference>
<dbReference type="Gene3D" id="3.40.50.300">
    <property type="entry name" value="P-loop containing nucleotide triphosphate hydrolases"/>
    <property type="match status" value="1"/>
</dbReference>
<dbReference type="Gene3D" id="1.20.120.850">
    <property type="entry name" value="SWI2/SNF2 ATPases, N-terminal domain"/>
    <property type="match status" value="1"/>
</dbReference>
<dbReference type="Gene3D" id="3.40.50.10810">
    <property type="entry name" value="Tandem AAA-ATPase domain"/>
    <property type="match status" value="1"/>
</dbReference>
<dbReference type="InterPro" id="IPR014001">
    <property type="entry name" value="Helicase_ATP-bd"/>
</dbReference>
<dbReference type="InterPro" id="IPR001650">
    <property type="entry name" value="Helicase_C-like"/>
</dbReference>
<dbReference type="InterPro" id="IPR027417">
    <property type="entry name" value="P-loop_NTPase"/>
</dbReference>
<dbReference type="InterPro" id="IPR038718">
    <property type="entry name" value="SNF2-like_sf"/>
</dbReference>
<dbReference type="InterPro" id="IPR049730">
    <property type="entry name" value="SNF2/RAD54-like_C"/>
</dbReference>
<dbReference type="InterPro" id="IPR000330">
    <property type="entry name" value="SNF2_N"/>
</dbReference>
<dbReference type="InterPro" id="IPR050496">
    <property type="entry name" value="SNF2_RAD54_helicase_repair"/>
</dbReference>
<dbReference type="PANTHER" id="PTHR45629:SF7">
    <property type="entry name" value="DNA EXCISION REPAIR PROTEIN ERCC-6-RELATED"/>
    <property type="match status" value="1"/>
</dbReference>
<dbReference type="PANTHER" id="PTHR45629">
    <property type="entry name" value="SNF2/RAD54 FAMILY MEMBER"/>
    <property type="match status" value="1"/>
</dbReference>
<dbReference type="Pfam" id="PF00271">
    <property type="entry name" value="Helicase_C"/>
    <property type="match status" value="1"/>
</dbReference>
<dbReference type="Pfam" id="PF00176">
    <property type="entry name" value="SNF2-rel_dom"/>
    <property type="match status" value="1"/>
</dbReference>
<dbReference type="SMART" id="SM00487">
    <property type="entry name" value="DEXDc"/>
    <property type="match status" value="1"/>
</dbReference>
<dbReference type="SMART" id="SM00490">
    <property type="entry name" value="HELICc"/>
    <property type="match status" value="1"/>
</dbReference>
<dbReference type="SUPFAM" id="SSF52540">
    <property type="entry name" value="P-loop containing nucleoside triphosphate hydrolases"/>
    <property type="match status" value="2"/>
</dbReference>
<dbReference type="PROSITE" id="PS51192">
    <property type="entry name" value="HELICASE_ATP_BIND_1"/>
    <property type="match status" value="1"/>
</dbReference>
<dbReference type="PROSITE" id="PS51194">
    <property type="entry name" value="HELICASE_CTER"/>
    <property type="match status" value="1"/>
</dbReference>
<proteinExistence type="inferred from homology"/>
<gene>
    <name type="primary">RDH54</name>
    <name type="synonym">TID1</name>
    <name type="ORF">AWRI1631_21610</name>
</gene>